<proteinExistence type="predicted"/>
<dbReference type="EMBL" id="AL009126">
    <property type="protein sequence ID" value="CAB14069.1"/>
    <property type="molecule type" value="Genomic_DNA"/>
</dbReference>
<dbReference type="RefSeq" id="NP_390034.1">
    <property type="nucleotide sequence ID" value="NC_000964.3"/>
</dbReference>
<dbReference type="RefSeq" id="WP_004398710.1">
    <property type="nucleotide sequence ID" value="NZ_OZ025638.1"/>
</dbReference>
<dbReference type="SMR" id="O31991"/>
<dbReference type="FunCoup" id="O31991">
    <property type="interactions" value="21"/>
</dbReference>
<dbReference type="STRING" id="224308.BSU21510"/>
<dbReference type="PaxDb" id="224308-BSU21510"/>
<dbReference type="EnsemblBacteria" id="CAB14069">
    <property type="protein sequence ID" value="CAB14069"/>
    <property type="gene ID" value="BSU_21510"/>
</dbReference>
<dbReference type="GeneID" id="939126"/>
<dbReference type="KEGG" id="bsu:BSU21510"/>
<dbReference type="PATRIC" id="fig|224308.179.peg.2348"/>
<dbReference type="eggNOG" id="ENOG5033B0A">
    <property type="taxonomic scope" value="Bacteria"/>
</dbReference>
<dbReference type="InParanoid" id="O31991"/>
<dbReference type="OrthoDB" id="1644322at2"/>
<dbReference type="PhylomeDB" id="O31991"/>
<dbReference type="BioCyc" id="BSUB:BSU21510-MONOMER"/>
<dbReference type="Proteomes" id="UP000001570">
    <property type="component" value="Chromosome"/>
</dbReference>
<dbReference type="InterPro" id="IPR014962">
    <property type="entry name" value="YolD"/>
</dbReference>
<dbReference type="PANTHER" id="PTHR40051">
    <property type="entry name" value="IG HYPOTHETICAL 15966"/>
    <property type="match status" value="1"/>
</dbReference>
<dbReference type="PANTHER" id="PTHR40051:SF1">
    <property type="entry name" value="YOLD-LIKE FAMILY PROTEIN"/>
    <property type="match status" value="1"/>
</dbReference>
<dbReference type="Pfam" id="PF08863">
    <property type="entry name" value="YolD"/>
    <property type="match status" value="1"/>
</dbReference>
<protein>
    <recommendedName>
        <fullName>SPbeta prophage-derived uncharacterized protein YolD</fullName>
    </recommendedName>
</protein>
<reference key="1">
    <citation type="journal article" date="1997" name="Nature">
        <title>The complete genome sequence of the Gram-positive bacterium Bacillus subtilis.</title>
        <authorList>
            <person name="Kunst F."/>
            <person name="Ogasawara N."/>
            <person name="Moszer I."/>
            <person name="Albertini A.M."/>
            <person name="Alloni G."/>
            <person name="Azevedo V."/>
            <person name="Bertero M.G."/>
            <person name="Bessieres P."/>
            <person name="Bolotin A."/>
            <person name="Borchert S."/>
            <person name="Borriss R."/>
            <person name="Boursier L."/>
            <person name="Brans A."/>
            <person name="Braun M."/>
            <person name="Brignell S.C."/>
            <person name="Bron S."/>
            <person name="Brouillet S."/>
            <person name="Bruschi C.V."/>
            <person name="Caldwell B."/>
            <person name="Capuano V."/>
            <person name="Carter N.M."/>
            <person name="Choi S.-K."/>
            <person name="Codani J.-J."/>
            <person name="Connerton I.F."/>
            <person name="Cummings N.J."/>
            <person name="Daniel R.A."/>
            <person name="Denizot F."/>
            <person name="Devine K.M."/>
            <person name="Duesterhoeft A."/>
            <person name="Ehrlich S.D."/>
            <person name="Emmerson P.T."/>
            <person name="Entian K.-D."/>
            <person name="Errington J."/>
            <person name="Fabret C."/>
            <person name="Ferrari E."/>
            <person name="Foulger D."/>
            <person name="Fritz C."/>
            <person name="Fujita M."/>
            <person name="Fujita Y."/>
            <person name="Fuma S."/>
            <person name="Galizzi A."/>
            <person name="Galleron N."/>
            <person name="Ghim S.-Y."/>
            <person name="Glaser P."/>
            <person name="Goffeau A."/>
            <person name="Golightly E.J."/>
            <person name="Grandi G."/>
            <person name="Guiseppi G."/>
            <person name="Guy B.J."/>
            <person name="Haga K."/>
            <person name="Haiech J."/>
            <person name="Harwood C.R."/>
            <person name="Henaut A."/>
            <person name="Hilbert H."/>
            <person name="Holsappel S."/>
            <person name="Hosono S."/>
            <person name="Hullo M.-F."/>
            <person name="Itaya M."/>
            <person name="Jones L.-M."/>
            <person name="Joris B."/>
            <person name="Karamata D."/>
            <person name="Kasahara Y."/>
            <person name="Klaerr-Blanchard M."/>
            <person name="Klein C."/>
            <person name="Kobayashi Y."/>
            <person name="Koetter P."/>
            <person name="Koningstein G."/>
            <person name="Krogh S."/>
            <person name="Kumano M."/>
            <person name="Kurita K."/>
            <person name="Lapidus A."/>
            <person name="Lardinois S."/>
            <person name="Lauber J."/>
            <person name="Lazarevic V."/>
            <person name="Lee S.-M."/>
            <person name="Levine A."/>
            <person name="Liu H."/>
            <person name="Masuda S."/>
            <person name="Mauel C."/>
            <person name="Medigue C."/>
            <person name="Medina N."/>
            <person name="Mellado R.P."/>
            <person name="Mizuno M."/>
            <person name="Moestl D."/>
            <person name="Nakai S."/>
            <person name="Noback M."/>
            <person name="Noone D."/>
            <person name="O'Reilly M."/>
            <person name="Ogawa K."/>
            <person name="Ogiwara A."/>
            <person name="Oudega B."/>
            <person name="Park S.-H."/>
            <person name="Parro V."/>
            <person name="Pohl T.M."/>
            <person name="Portetelle D."/>
            <person name="Porwollik S."/>
            <person name="Prescott A.M."/>
            <person name="Presecan E."/>
            <person name="Pujic P."/>
            <person name="Purnelle B."/>
            <person name="Rapoport G."/>
            <person name="Rey M."/>
            <person name="Reynolds S."/>
            <person name="Rieger M."/>
            <person name="Rivolta C."/>
            <person name="Rocha E."/>
            <person name="Roche B."/>
            <person name="Rose M."/>
            <person name="Sadaie Y."/>
            <person name="Sato T."/>
            <person name="Scanlan E."/>
            <person name="Schleich S."/>
            <person name="Schroeter R."/>
            <person name="Scoffone F."/>
            <person name="Sekiguchi J."/>
            <person name="Sekowska A."/>
            <person name="Seror S.J."/>
            <person name="Serror P."/>
            <person name="Shin B.-S."/>
            <person name="Soldo B."/>
            <person name="Sorokin A."/>
            <person name="Tacconi E."/>
            <person name="Takagi T."/>
            <person name="Takahashi H."/>
            <person name="Takemaru K."/>
            <person name="Takeuchi M."/>
            <person name="Tamakoshi A."/>
            <person name="Tanaka T."/>
            <person name="Terpstra P."/>
            <person name="Tognoni A."/>
            <person name="Tosato V."/>
            <person name="Uchiyama S."/>
            <person name="Vandenbol M."/>
            <person name="Vannier F."/>
            <person name="Vassarotti A."/>
            <person name="Viari A."/>
            <person name="Wambutt R."/>
            <person name="Wedler E."/>
            <person name="Wedler H."/>
            <person name="Weitzenegger T."/>
            <person name="Winters P."/>
            <person name="Wipat A."/>
            <person name="Yamamoto H."/>
            <person name="Yamane K."/>
            <person name="Yasumoto K."/>
            <person name="Yata K."/>
            <person name="Yoshida K."/>
            <person name="Yoshikawa H.-F."/>
            <person name="Zumstein E."/>
            <person name="Yoshikawa H."/>
            <person name="Danchin A."/>
        </authorList>
    </citation>
    <scope>NUCLEOTIDE SEQUENCE [LARGE SCALE GENOMIC DNA]</scope>
    <source>
        <strain>168</strain>
    </source>
</reference>
<accession>O31991</accession>
<sequence length="110" mass="12997">MLRDRGTIKWTSMMLPEHLTQLKQDLIDVSKIEKPSLDDQQIEEMDILVSEALEFNKELQFKLFHNGFVENVTGRVHYINFEQQKLHVKDQNDNTVYINMNNIIGVTYND</sequence>
<feature type="chain" id="PRO_0000360632" description="SPbeta prophage-derived uncharacterized protein YolD">
    <location>
        <begin position="1"/>
        <end position="110"/>
    </location>
</feature>
<gene>
    <name type="primary">yolD</name>
    <name type="ordered locus">BSU21510</name>
</gene>
<keyword id="KW-1185">Reference proteome</keyword>
<name>YOLD_BACSU</name>
<organism>
    <name type="scientific">Bacillus subtilis (strain 168)</name>
    <dbReference type="NCBI Taxonomy" id="224308"/>
    <lineage>
        <taxon>Bacteria</taxon>
        <taxon>Bacillati</taxon>
        <taxon>Bacillota</taxon>
        <taxon>Bacilli</taxon>
        <taxon>Bacillales</taxon>
        <taxon>Bacillaceae</taxon>
        <taxon>Bacillus</taxon>
    </lineage>
</organism>